<protein>
    <recommendedName>
        <fullName evidence="1">ADP-L-glycero-D-manno-heptose-6-epimerase</fullName>
        <ecNumber evidence="1">5.1.3.20</ecNumber>
    </recommendedName>
    <alternativeName>
        <fullName evidence="1">ADP-L-glycero-beta-D-manno-heptose-6-epimerase</fullName>
        <shortName evidence="1">ADP-glyceromanno-heptose 6-epimerase</shortName>
        <shortName evidence="1">ADP-hep 6-epimerase</shortName>
        <shortName evidence="1">AGME</shortName>
    </alternativeName>
</protein>
<name>HLDD_VIBC1</name>
<comment type="function">
    <text evidence="1">Catalyzes the interconversion between ADP-D-glycero-beta-D-manno-heptose and ADP-L-glycero-beta-D-manno-heptose via an epimerization at carbon 6 of the heptose.</text>
</comment>
<comment type="catalytic activity">
    <reaction evidence="1">
        <text>ADP-D-glycero-beta-D-manno-heptose = ADP-L-glycero-beta-D-manno-heptose</text>
        <dbReference type="Rhea" id="RHEA:17577"/>
        <dbReference type="ChEBI" id="CHEBI:59967"/>
        <dbReference type="ChEBI" id="CHEBI:61506"/>
        <dbReference type="EC" id="5.1.3.20"/>
    </reaction>
</comment>
<comment type="cofactor">
    <cofactor evidence="1">
        <name>NADP(+)</name>
        <dbReference type="ChEBI" id="CHEBI:58349"/>
    </cofactor>
    <text evidence="1">Binds 1 NADP(+) per subunit.</text>
</comment>
<comment type="pathway">
    <text evidence="1">Nucleotide-sugar biosynthesis; ADP-L-glycero-beta-D-manno-heptose biosynthesis; ADP-L-glycero-beta-D-manno-heptose from D-glycero-beta-D-manno-heptose 7-phosphate: step 4/4.</text>
</comment>
<comment type="subunit">
    <text evidence="1">Homopentamer.</text>
</comment>
<comment type="domain">
    <text evidence="1">Contains a large N-terminal NADP-binding domain, and a smaller C-terminal substrate-binding domain.</text>
</comment>
<comment type="similarity">
    <text evidence="1">Belongs to the NAD(P)-dependent epimerase/dehydratase family. HldD subfamily.</text>
</comment>
<reference key="1">
    <citation type="submission" date="2007-08" db="EMBL/GenBank/DDBJ databases">
        <authorList>
            <consortium name="The Vibrio harveyi Genome Sequencing Project"/>
            <person name="Bassler B."/>
            <person name="Clifton S.W."/>
            <person name="Fulton L."/>
            <person name="Delehaunty K."/>
            <person name="Fronick C."/>
            <person name="Harrison M."/>
            <person name="Markivic C."/>
            <person name="Fulton R."/>
            <person name="Tin-Wollam A.-M."/>
            <person name="Shah N."/>
            <person name="Pepin K."/>
            <person name="Nash W."/>
            <person name="Thiruvilangam P."/>
            <person name="Bhonagiri V."/>
            <person name="Waters C."/>
            <person name="Tu K.C."/>
            <person name="Irgon J."/>
            <person name="Wilson R.K."/>
        </authorList>
    </citation>
    <scope>NUCLEOTIDE SEQUENCE [LARGE SCALE GENOMIC DNA]</scope>
    <source>
        <strain>ATCC BAA-1116 / BB120</strain>
    </source>
</reference>
<organism>
    <name type="scientific">Vibrio campbellii (strain ATCC BAA-1116)</name>
    <dbReference type="NCBI Taxonomy" id="2902295"/>
    <lineage>
        <taxon>Bacteria</taxon>
        <taxon>Pseudomonadati</taxon>
        <taxon>Pseudomonadota</taxon>
        <taxon>Gammaproteobacteria</taxon>
        <taxon>Vibrionales</taxon>
        <taxon>Vibrionaceae</taxon>
        <taxon>Vibrio</taxon>
    </lineage>
</organism>
<sequence>MIIVTGGAGMIGSNIVKALNEAGINDILVVDNLKNGKKFKNLVDLDITDYMDRDDFLTQIMAGDDFGPIEAIFHEGACSATTEWDGKYMMLNNYEYSKELLHYCLDREIPFLYASSAATYGETETFVEEREYEGALNVYGYSKQQFDNYVRRLWKDAEEHGEQLSQITGFRYFNVYGPREDHKGSMASVAFHLNNQINAGENPKLFAGSESFKRDFVYVGDVCKVNLWFLENGVSGIFNCGTGRAESFEEVAKAVVKHHNKGEIQTIPFPDHLKGAYQEFTQADLTKLRAAGCDVEFKTVAEGVAEYLAIQNR</sequence>
<dbReference type="EC" id="5.1.3.20" evidence="1"/>
<dbReference type="EMBL" id="CP000789">
    <property type="protein sequence ID" value="ABU69684.1"/>
    <property type="molecule type" value="Genomic_DNA"/>
</dbReference>
<dbReference type="RefSeq" id="WP_012126839.1">
    <property type="nucleotide sequence ID" value="NC_009783.1"/>
</dbReference>
<dbReference type="SMR" id="A7MSM1"/>
<dbReference type="KEGG" id="vha:VIBHAR_00682"/>
<dbReference type="PATRIC" id="fig|338187.25.peg.1932"/>
<dbReference type="UniPathway" id="UPA00356">
    <property type="reaction ID" value="UER00440"/>
</dbReference>
<dbReference type="Proteomes" id="UP000008152">
    <property type="component" value="Chromosome I"/>
</dbReference>
<dbReference type="GO" id="GO:0008712">
    <property type="term" value="F:ADP-glyceromanno-heptose 6-epimerase activity"/>
    <property type="evidence" value="ECO:0007669"/>
    <property type="project" value="UniProtKB-UniRule"/>
</dbReference>
<dbReference type="GO" id="GO:0050661">
    <property type="term" value="F:NADP binding"/>
    <property type="evidence" value="ECO:0007669"/>
    <property type="project" value="InterPro"/>
</dbReference>
<dbReference type="GO" id="GO:0097171">
    <property type="term" value="P:ADP-L-glycero-beta-D-manno-heptose biosynthetic process"/>
    <property type="evidence" value="ECO:0007669"/>
    <property type="project" value="UniProtKB-UniPathway"/>
</dbReference>
<dbReference type="GO" id="GO:0005975">
    <property type="term" value="P:carbohydrate metabolic process"/>
    <property type="evidence" value="ECO:0007669"/>
    <property type="project" value="UniProtKB-UniRule"/>
</dbReference>
<dbReference type="CDD" id="cd05248">
    <property type="entry name" value="ADP_GME_SDR_e"/>
    <property type="match status" value="1"/>
</dbReference>
<dbReference type="Gene3D" id="3.40.50.720">
    <property type="entry name" value="NAD(P)-binding Rossmann-like Domain"/>
    <property type="match status" value="1"/>
</dbReference>
<dbReference type="Gene3D" id="3.90.25.10">
    <property type="entry name" value="UDP-galactose 4-epimerase, domain 1"/>
    <property type="match status" value="1"/>
</dbReference>
<dbReference type="HAMAP" id="MF_01601">
    <property type="entry name" value="Heptose_epimerase"/>
    <property type="match status" value="1"/>
</dbReference>
<dbReference type="InterPro" id="IPR001509">
    <property type="entry name" value="Epimerase_deHydtase"/>
</dbReference>
<dbReference type="InterPro" id="IPR011912">
    <property type="entry name" value="Heptose_epim"/>
</dbReference>
<dbReference type="InterPro" id="IPR036291">
    <property type="entry name" value="NAD(P)-bd_dom_sf"/>
</dbReference>
<dbReference type="NCBIfam" id="TIGR02197">
    <property type="entry name" value="heptose_epim"/>
    <property type="match status" value="1"/>
</dbReference>
<dbReference type="NCBIfam" id="NF008360">
    <property type="entry name" value="PRK11150.1"/>
    <property type="match status" value="1"/>
</dbReference>
<dbReference type="PANTHER" id="PTHR43103:SF3">
    <property type="entry name" value="ADP-L-GLYCERO-D-MANNO-HEPTOSE-6-EPIMERASE"/>
    <property type="match status" value="1"/>
</dbReference>
<dbReference type="PANTHER" id="PTHR43103">
    <property type="entry name" value="NUCLEOSIDE-DIPHOSPHATE-SUGAR EPIMERASE"/>
    <property type="match status" value="1"/>
</dbReference>
<dbReference type="Pfam" id="PF01370">
    <property type="entry name" value="Epimerase"/>
    <property type="match status" value="1"/>
</dbReference>
<dbReference type="SUPFAM" id="SSF51735">
    <property type="entry name" value="NAD(P)-binding Rossmann-fold domains"/>
    <property type="match status" value="1"/>
</dbReference>
<feature type="chain" id="PRO_1000069370" description="ADP-L-glycero-D-manno-heptose-6-epimerase">
    <location>
        <begin position="1"/>
        <end position="313"/>
    </location>
</feature>
<feature type="active site" description="Proton acceptor" evidence="1">
    <location>
        <position position="139"/>
    </location>
</feature>
<feature type="active site" description="Proton acceptor" evidence="1">
    <location>
        <position position="183"/>
    </location>
</feature>
<feature type="binding site" evidence="1">
    <location>
        <begin position="10"/>
        <end position="11"/>
    </location>
    <ligand>
        <name>NADP(+)</name>
        <dbReference type="ChEBI" id="CHEBI:58349"/>
    </ligand>
</feature>
<feature type="binding site" evidence="1">
    <location>
        <begin position="31"/>
        <end position="32"/>
    </location>
    <ligand>
        <name>NADP(+)</name>
        <dbReference type="ChEBI" id="CHEBI:58349"/>
    </ligand>
</feature>
<feature type="binding site" evidence="1">
    <location>
        <position position="38"/>
    </location>
    <ligand>
        <name>NADP(+)</name>
        <dbReference type="ChEBI" id="CHEBI:58349"/>
    </ligand>
</feature>
<feature type="binding site" evidence="1">
    <location>
        <position position="53"/>
    </location>
    <ligand>
        <name>NADP(+)</name>
        <dbReference type="ChEBI" id="CHEBI:58349"/>
    </ligand>
</feature>
<feature type="binding site" evidence="1">
    <location>
        <begin position="75"/>
        <end position="79"/>
    </location>
    <ligand>
        <name>NADP(+)</name>
        <dbReference type="ChEBI" id="CHEBI:58349"/>
    </ligand>
</feature>
<feature type="binding site" evidence="1">
    <location>
        <position position="92"/>
    </location>
    <ligand>
        <name>NADP(+)</name>
        <dbReference type="ChEBI" id="CHEBI:58349"/>
    </ligand>
</feature>
<feature type="binding site" evidence="1">
    <location>
        <position position="143"/>
    </location>
    <ligand>
        <name>NADP(+)</name>
        <dbReference type="ChEBI" id="CHEBI:58349"/>
    </ligand>
</feature>
<feature type="binding site" evidence="1">
    <location>
        <position position="174"/>
    </location>
    <ligand>
        <name>substrate</name>
    </ligand>
</feature>
<feature type="binding site" evidence="1">
    <location>
        <position position="175"/>
    </location>
    <ligand>
        <name>NADP(+)</name>
        <dbReference type="ChEBI" id="CHEBI:58349"/>
    </ligand>
</feature>
<feature type="binding site" evidence="1">
    <location>
        <position position="183"/>
    </location>
    <ligand>
        <name>NADP(+)</name>
        <dbReference type="ChEBI" id="CHEBI:58349"/>
    </ligand>
</feature>
<feature type="binding site" evidence="1">
    <location>
        <position position="185"/>
    </location>
    <ligand>
        <name>substrate</name>
    </ligand>
</feature>
<feature type="binding site" evidence="1">
    <location>
        <position position="192"/>
    </location>
    <ligand>
        <name>substrate</name>
    </ligand>
</feature>
<feature type="binding site" evidence="1">
    <location>
        <begin position="206"/>
        <end position="209"/>
    </location>
    <ligand>
        <name>substrate</name>
    </ligand>
</feature>
<feature type="binding site" evidence="1">
    <location>
        <position position="214"/>
    </location>
    <ligand>
        <name>substrate</name>
    </ligand>
</feature>
<feature type="binding site" evidence="1">
    <location>
        <position position="277"/>
    </location>
    <ligand>
        <name>substrate</name>
    </ligand>
</feature>
<evidence type="ECO:0000255" key="1">
    <source>
        <dbReference type="HAMAP-Rule" id="MF_01601"/>
    </source>
</evidence>
<proteinExistence type="inferred from homology"/>
<keyword id="KW-0119">Carbohydrate metabolism</keyword>
<keyword id="KW-0413">Isomerase</keyword>
<keyword id="KW-0521">NADP</keyword>
<gene>
    <name evidence="1" type="primary">hldD</name>
    <name type="ordered locus">VIBHAR_00682</name>
</gene>
<accession>A7MSM1</accession>